<accession>P48264</accession>
<reference key="1">
    <citation type="journal article" date="1995" name="Plant Mol. Biol. Rep.">
        <title>Nucleotide sequence of the cyanelle DNA from Cyanophora paradoxa.</title>
        <authorList>
            <person name="Stirewalt V.L."/>
            <person name="Michalowski C.B."/>
            <person name="Loeffelhardt W."/>
            <person name="Bohnert H.J."/>
            <person name="Bryant D.A."/>
        </authorList>
    </citation>
    <scope>NUCLEOTIDE SEQUENCE [LARGE SCALE GENOMIC DNA]</scope>
    <source>
        <strain>UTEX LB 555 / Pringsheim</strain>
    </source>
</reference>
<reference key="2">
    <citation type="book" date="1997" name="Eukaryotism and symbiosis">
        <title>The complete sequence of the cyanelle genome of Cyanophora paradoxa: the genetic complexity of a primitive plastid.</title>
        <editorList>
            <person name="Schenk H.E.A."/>
            <person name="Herrmann R."/>
            <person name="Jeon K.W."/>
            <person name="Mueller N.E."/>
            <person name="Schwemmler W."/>
        </editorList>
        <authorList>
            <person name="Loeffelhardt W."/>
            <person name="Stirewalt V.L."/>
            <person name="Michalowski C.B."/>
            <person name="Annarella M."/>
            <person name="Farley J.Y."/>
            <person name="Schluchter W.M."/>
            <person name="Chung S."/>
            <person name="Newmann-Spallart C."/>
            <person name="Steiner J.M."/>
            <person name="Jakowitsch J."/>
            <person name="Bohnert H.J."/>
            <person name="Bryant D.A."/>
        </authorList>
    </citation>
    <scope>NUCLEOTIDE SEQUENCE [LARGE SCALE GENOMIC DNA]</scope>
    <source>
        <strain>UTEX LB 555 / Pringsheim</strain>
    </source>
</reference>
<organism>
    <name type="scientific">Cyanophora paradoxa</name>
    <dbReference type="NCBI Taxonomy" id="2762"/>
    <lineage>
        <taxon>Eukaryota</taxon>
        <taxon>Glaucocystophyceae</taxon>
        <taxon>Cyanophoraceae</taxon>
        <taxon>Cyanophora</taxon>
    </lineage>
</organism>
<name>PSB28_CYAPA</name>
<protein>
    <recommendedName>
        <fullName evidence="2">Photosystem II reaction center Psb28 protein</fullName>
    </recommendedName>
    <alternativeName>
        <fullName evidence="2">Photosystem II 13 kDa protein</fullName>
    </alternativeName>
    <alternativeName>
        <fullName evidence="2">Photosystem II reaction center W protein</fullName>
    </alternativeName>
</protein>
<dbReference type="EMBL" id="U30821">
    <property type="protein sequence ID" value="AAA81264.1"/>
    <property type="molecule type" value="Genomic_DNA"/>
</dbReference>
<dbReference type="PIR" id="T06921">
    <property type="entry name" value="T06921"/>
</dbReference>
<dbReference type="RefSeq" id="NP_043233.1">
    <property type="nucleotide sequence ID" value="NC_001675.1"/>
</dbReference>
<dbReference type="SMR" id="P48264"/>
<dbReference type="GeneID" id="801545"/>
<dbReference type="GO" id="GO:0033115">
    <property type="term" value="C:cyanelle thylakoid membrane"/>
    <property type="evidence" value="ECO:0007669"/>
    <property type="project" value="UniProtKB-SubCell"/>
</dbReference>
<dbReference type="GO" id="GO:0009523">
    <property type="term" value="C:photosystem II"/>
    <property type="evidence" value="ECO:0007669"/>
    <property type="project" value="UniProtKB-KW"/>
</dbReference>
<dbReference type="GO" id="GO:0015979">
    <property type="term" value="P:photosynthesis"/>
    <property type="evidence" value="ECO:0007669"/>
    <property type="project" value="UniProtKB-UniRule"/>
</dbReference>
<dbReference type="Gene3D" id="2.40.30.220">
    <property type="entry name" value="Photosystem II Psb28"/>
    <property type="match status" value="1"/>
</dbReference>
<dbReference type="HAMAP" id="MF_01370">
    <property type="entry name" value="PSII_Psb28"/>
    <property type="match status" value="1"/>
</dbReference>
<dbReference type="InterPro" id="IPR038676">
    <property type="entry name" value="Psb28_c1_sf"/>
</dbReference>
<dbReference type="InterPro" id="IPR005610">
    <property type="entry name" value="PSII_Psb28_class-1"/>
</dbReference>
<dbReference type="NCBIfam" id="TIGR03047">
    <property type="entry name" value="PS_II_psb28"/>
    <property type="match status" value="1"/>
</dbReference>
<dbReference type="PANTHER" id="PTHR34963">
    <property type="match status" value="1"/>
</dbReference>
<dbReference type="PANTHER" id="PTHR34963:SF2">
    <property type="entry name" value="PHOTOSYSTEM II REACTION CENTER PSB28 PROTEIN, CHLOROPLASTIC"/>
    <property type="match status" value="1"/>
</dbReference>
<dbReference type="Pfam" id="PF03912">
    <property type="entry name" value="Psb28"/>
    <property type="match status" value="1"/>
</dbReference>
<comment type="subunit">
    <text evidence="2">Part of the photosystem II complex.</text>
</comment>
<comment type="subcellular location">
    <subcellularLocation>
        <location evidence="1">Plastid</location>
        <location evidence="1">Cyanelle thylakoid membrane</location>
        <topology evidence="2">Peripheral membrane protein</topology>
        <orientation evidence="2">Stromal side</orientation>
    </subcellularLocation>
</comment>
<comment type="similarity">
    <text evidence="2">Belongs to the Psb28 family.</text>
</comment>
<evidence type="ECO:0000250" key="1"/>
<evidence type="ECO:0000255" key="2">
    <source>
        <dbReference type="HAMAP-Rule" id="MF_01370"/>
    </source>
</evidence>
<feature type="chain" id="PRO_0000217280" description="Photosystem II reaction center Psb28 protein">
    <location>
        <begin position="1"/>
        <end position="112"/>
    </location>
</feature>
<sequence length="112" mass="13005">MAKIQFIQGVDEEAIPDVKLSRSQDGANGIAKFYFDKPTVFDVYQGEITGLYLIDEEGELSTRTVYAKFINGKPQSIEASYIMNNREEWERFIRFMERYAKQNDLSFTKAKN</sequence>
<gene>
    <name evidence="2" type="primary">psb28</name>
    <name evidence="2" type="synonym">psbW</name>
    <name type="synonym">ycf79</name>
</gene>
<geneLocation type="cyanelle"/>
<proteinExistence type="inferred from homology"/>
<keyword id="KW-0194">Cyanelle</keyword>
<keyword id="KW-0472">Membrane</keyword>
<keyword id="KW-0602">Photosynthesis</keyword>
<keyword id="KW-0604">Photosystem II</keyword>
<keyword id="KW-0934">Plastid</keyword>
<keyword id="KW-0793">Thylakoid</keyword>